<comment type="function">
    <text evidence="2 3">Associates with the striatin-interacting phosphatase and kinase (STRIPAK) core complex, forming the extended (SIKE1:SLMAP)STRIPAK complex. The (SIKE1:SLMAP)STRIPAK complex dephosphorylates STK3 leading to the inhibition of Hippo signaling and the control of cell growth (By similarity). May play a role during myoblast fusion (By similarity).</text>
</comment>
<comment type="subunit">
    <text evidence="2 3">Homodimer. Interacts with myosin (By similarity). Interacts with SIKE1 and both associate with the STRIPAK core complex composed of PP2A catalytic and scaffolding subunits, the striatins (PP2A regulatory subunits), the striatin-associated proteins MOB4, STRIP1 and STRIP2, PDCD10 and members of the STE20 kinases, such as STK24 and STK26. Interacts (via FHA domain) with STK3 (when phosphorylated); the interaction associates STK3 with the STRIPAK complex (By similarity).</text>
</comment>
<comment type="subcellular location">
    <subcellularLocation>
        <location evidence="7">Cell membrane</location>
        <location evidence="7">Sarcolemma</location>
        <topology evidence="7">Single-pass type IV membrane protein</topology>
    </subcellularLocation>
    <subcellularLocation>
        <location evidence="3">Cytoplasm</location>
        <location evidence="3">Cytoskeleton</location>
        <location evidence="3">Microtubule organizing center</location>
        <location evidence="3">Centrosome</location>
    </subcellularLocation>
    <subcellularLocation>
        <location evidence="2">Endoplasmic reticulum membrane</location>
        <topology evidence="2">Single-pass type IV membrane protein</topology>
    </subcellularLocation>
    <subcellularLocation>
        <location evidence="2">Mitochondrion membrane</location>
        <topology evidence="2">Single-pass type IV membrane protein</topology>
    </subcellularLocation>
    <text evidence="1">Distributed in the transverse tubules and near the junctional sarcoplasmic reticulum. Detected along the Z-lines and M-lines in cardiomyocytes. Membrane-associated (By similarity). Localizes to the centrosomes in a microtubule- dependent manner (By similarity).</text>
</comment>
<comment type="domain">
    <text evidence="2">Alternative spliced transmembrane domains determine subcellular targeting. Isoforms 1, 2, 3 and 4 are targeted to endoplasmic reticulum membrane as well as mitochondrion membrane. Isoform 5 is not targeted to mitochondrion membrane but to endoplasmic reticulum membrane.</text>
</comment>
<comment type="similarity">
    <text evidence="8">Belongs to the SLMAP family.</text>
</comment>
<proteinExistence type="evidence at protein level"/>
<feature type="chain" id="PRO_0000259665" description="Sarcolemmal membrane-associated protein">
    <location>
        <begin position="1"/>
        <end position="858"/>
    </location>
</feature>
<feature type="topological domain" description="Cytoplasmic" evidence="4">
    <location>
        <begin position="1"/>
        <end position="832"/>
    </location>
</feature>
<feature type="transmembrane region" description="Helical; Anchor for type IV membrane protein" evidence="4">
    <location>
        <begin position="833"/>
        <end position="853"/>
    </location>
</feature>
<feature type="topological domain" description="Extracellular" evidence="4">
    <location>
        <begin position="854"/>
        <end position="858"/>
    </location>
</feature>
<feature type="domain" description="FHA" evidence="5">
    <location>
        <begin position="28"/>
        <end position="85"/>
    </location>
</feature>
<feature type="region of interest" description="Necessary for targeting to centrosomes" evidence="1">
    <location>
        <begin position="1"/>
        <end position="165"/>
    </location>
</feature>
<feature type="region of interest" description="Disordered" evidence="6">
    <location>
        <begin position="456"/>
        <end position="492"/>
    </location>
</feature>
<feature type="coiled-coil region" evidence="4">
    <location>
        <begin position="169"/>
        <end position="204"/>
    </location>
</feature>
<feature type="coiled-coil region" evidence="4">
    <location>
        <begin position="232"/>
        <end position="381"/>
    </location>
</feature>
<feature type="coiled-coil region" evidence="4">
    <location>
        <begin position="516"/>
        <end position="829"/>
    </location>
</feature>
<feature type="compositionally biased region" description="Basic and acidic residues" evidence="6">
    <location>
        <begin position="456"/>
        <end position="470"/>
    </location>
</feature>
<feature type="modified residue" description="Phosphoserine" evidence="2">
    <location>
        <position position="150"/>
    </location>
</feature>
<feature type="modified residue" description="Phosphoserine" evidence="9">
    <location>
        <position position="472"/>
    </location>
</feature>
<feature type="modified residue" description="Phosphoserine" evidence="9">
    <location>
        <position position="476"/>
    </location>
</feature>
<evidence type="ECO:0000250" key="1"/>
<evidence type="ECO:0000250" key="2">
    <source>
        <dbReference type="UniProtKB" id="Q14BN4"/>
    </source>
</evidence>
<evidence type="ECO:0000250" key="3">
    <source>
        <dbReference type="UniProtKB" id="Q3URD3"/>
    </source>
</evidence>
<evidence type="ECO:0000255" key="4"/>
<evidence type="ECO:0000255" key="5">
    <source>
        <dbReference type="PROSITE-ProRule" id="PRU00086"/>
    </source>
</evidence>
<evidence type="ECO:0000256" key="6">
    <source>
        <dbReference type="SAM" id="MobiDB-lite"/>
    </source>
</evidence>
<evidence type="ECO:0000269" key="7">
    <source>
    </source>
</evidence>
<evidence type="ECO:0000305" key="8"/>
<evidence type="ECO:0007744" key="9">
    <source>
    </source>
</evidence>
<name>SLMAP_RAT</name>
<accession>P0C219</accession>
<reference key="1">
    <citation type="journal article" date="2004" name="Nature">
        <title>Genome sequence of the Brown Norway rat yields insights into mammalian evolution.</title>
        <authorList>
            <person name="Gibbs R.A."/>
            <person name="Weinstock G.M."/>
            <person name="Metzker M.L."/>
            <person name="Muzny D.M."/>
            <person name="Sodergren E.J."/>
            <person name="Scherer S."/>
            <person name="Scott G."/>
            <person name="Steffen D."/>
            <person name="Worley K.C."/>
            <person name="Burch P.E."/>
            <person name="Okwuonu G."/>
            <person name="Hines S."/>
            <person name="Lewis L."/>
            <person name="Deramo C."/>
            <person name="Delgado O."/>
            <person name="Dugan-Rocha S."/>
            <person name="Miner G."/>
            <person name="Morgan M."/>
            <person name="Hawes A."/>
            <person name="Gill R."/>
            <person name="Holt R.A."/>
            <person name="Adams M.D."/>
            <person name="Amanatides P.G."/>
            <person name="Baden-Tillson H."/>
            <person name="Barnstead M."/>
            <person name="Chin S."/>
            <person name="Evans C.A."/>
            <person name="Ferriera S."/>
            <person name="Fosler C."/>
            <person name="Glodek A."/>
            <person name="Gu Z."/>
            <person name="Jennings D."/>
            <person name="Kraft C.L."/>
            <person name="Nguyen T."/>
            <person name="Pfannkoch C.M."/>
            <person name="Sitter C."/>
            <person name="Sutton G.G."/>
            <person name="Venter J.C."/>
            <person name="Woodage T."/>
            <person name="Smith D."/>
            <person name="Lee H.-M."/>
            <person name="Gustafson E."/>
            <person name="Cahill P."/>
            <person name="Kana A."/>
            <person name="Doucette-Stamm L."/>
            <person name="Weinstock K."/>
            <person name="Fechtel K."/>
            <person name="Weiss R.B."/>
            <person name="Dunn D.M."/>
            <person name="Green E.D."/>
            <person name="Blakesley R.W."/>
            <person name="Bouffard G.G."/>
            <person name="De Jong P.J."/>
            <person name="Osoegawa K."/>
            <person name="Zhu B."/>
            <person name="Marra M."/>
            <person name="Schein J."/>
            <person name="Bosdet I."/>
            <person name="Fjell C."/>
            <person name="Jones S."/>
            <person name="Krzywinski M."/>
            <person name="Mathewson C."/>
            <person name="Siddiqui A."/>
            <person name="Wye N."/>
            <person name="McPherson J."/>
            <person name="Zhao S."/>
            <person name="Fraser C.M."/>
            <person name="Shetty J."/>
            <person name="Shatsman S."/>
            <person name="Geer K."/>
            <person name="Chen Y."/>
            <person name="Abramzon S."/>
            <person name="Nierman W.C."/>
            <person name="Havlak P.H."/>
            <person name="Chen R."/>
            <person name="Durbin K.J."/>
            <person name="Egan A."/>
            <person name="Ren Y."/>
            <person name="Song X.-Z."/>
            <person name="Li B."/>
            <person name="Liu Y."/>
            <person name="Qin X."/>
            <person name="Cawley S."/>
            <person name="Cooney A.J."/>
            <person name="D'Souza L.M."/>
            <person name="Martin K."/>
            <person name="Wu J.Q."/>
            <person name="Gonzalez-Garay M.L."/>
            <person name="Jackson A.R."/>
            <person name="Kalafus K.J."/>
            <person name="McLeod M.P."/>
            <person name="Milosavljevic A."/>
            <person name="Virk D."/>
            <person name="Volkov A."/>
            <person name="Wheeler D.A."/>
            <person name="Zhang Z."/>
            <person name="Bailey J.A."/>
            <person name="Eichler E.E."/>
            <person name="Tuzun E."/>
            <person name="Birney E."/>
            <person name="Mongin E."/>
            <person name="Ureta-Vidal A."/>
            <person name="Woodwark C."/>
            <person name="Zdobnov E."/>
            <person name="Bork P."/>
            <person name="Suyama M."/>
            <person name="Torrents D."/>
            <person name="Alexandersson M."/>
            <person name="Trask B.J."/>
            <person name="Young J.M."/>
            <person name="Huang H."/>
            <person name="Wang H."/>
            <person name="Xing H."/>
            <person name="Daniels S."/>
            <person name="Gietzen D."/>
            <person name="Schmidt J."/>
            <person name="Stevens K."/>
            <person name="Vitt U."/>
            <person name="Wingrove J."/>
            <person name="Camara F."/>
            <person name="Mar Alba M."/>
            <person name="Abril J.F."/>
            <person name="Guigo R."/>
            <person name="Smit A."/>
            <person name="Dubchak I."/>
            <person name="Rubin E.M."/>
            <person name="Couronne O."/>
            <person name="Poliakov A."/>
            <person name="Huebner N."/>
            <person name="Ganten D."/>
            <person name="Goesele C."/>
            <person name="Hummel O."/>
            <person name="Kreitler T."/>
            <person name="Lee Y.-A."/>
            <person name="Monti J."/>
            <person name="Schulz H."/>
            <person name="Zimdahl H."/>
            <person name="Himmelbauer H."/>
            <person name="Lehrach H."/>
            <person name="Jacob H.J."/>
            <person name="Bromberg S."/>
            <person name="Gullings-Handley J."/>
            <person name="Jensen-Seaman M.I."/>
            <person name="Kwitek A.E."/>
            <person name="Lazar J."/>
            <person name="Pasko D."/>
            <person name="Tonellato P.J."/>
            <person name="Twigger S."/>
            <person name="Ponting C.P."/>
            <person name="Duarte J.M."/>
            <person name="Rice S."/>
            <person name="Goodstadt L."/>
            <person name="Beatson S.A."/>
            <person name="Emes R.D."/>
            <person name="Winter E.E."/>
            <person name="Webber C."/>
            <person name="Brandt P."/>
            <person name="Nyakatura G."/>
            <person name="Adetobi M."/>
            <person name="Chiaromonte F."/>
            <person name="Elnitski L."/>
            <person name="Eswara P."/>
            <person name="Hardison R.C."/>
            <person name="Hou M."/>
            <person name="Kolbe D."/>
            <person name="Makova K."/>
            <person name="Miller W."/>
            <person name="Nekrutenko A."/>
            <person name="Riemer C."/>
            <person name="Schwartz S."/>
            <person name="Taylor J."/>
            <person name="Yang S."/>
            <person name="Zhang Y."/>
            <person name="Lindpaintner K."/>
            <person name="Andrews T.D."/>
            <person name="Caccamo M."/>
            <person name="Clamp M."/>
            <person name="Clarke L."/>
            <person name="Curwen V."/>
            <person name="Durbin R.M."/>
            <person name="Eyras E."/>
            <person name="Searle S.M."/>
            <person name="Cooper G.M."/>
            <person name="Batzoglou S."/>
            <person name="Brudno M."/>
            <person name="Sidow A."/>
            <person name="Stone E.A."/>
            <person name="Payseur B.A."/>
            <person name="Bourque G."/>
            <person name="Lopez-Otin C."/>
            <person name="Puente X.S."/>
            <person name="Chakrabarti K."/>
            <person name="Chatterji S."/>
            <person name="Dewey C."/>
            <person name="Pachter L."/>
            <person name="Bray N."/>
            <person name="Yap V.B."/>
            <person name="Caspi A."/>
            <person name="Tesler G."/>
            <person name="Pevzner P.A."/>
            <person name="Haussler D."/>
            <person name="Roskin K.M."/>
            <person name="Baertsch R."/>
            <person name="Clawson H."/>
            <person name="Furey T.S."/>
            <person name="Hinrichs A.S."/>
            <person name="Karolchik D."/>
            <person name="Kent W.J."/>
            <person name="Rosenbloom K.R."/>
            <person name="Trumbower H."/>
            <person name="Weirauch M."/>
            <person name="Cooper D.N."/>
            <person name="Stenson P.D."/>
            <person name="Ma B."/>
            <person name="Brent M."/>
            <person name="Arumugam M."/>
            <person name="Shteynberg D."/>
            <person name="Copley R.R."/>
            <person name="Taylor M.S."/>
            <person name="Riethman H."/>
            <person name="Mudunuri U."/>
            <person name="Peterson J."/>
            <person name="Guyer M."/>
            <person name="Felsenfeld A."/>
            <person name="Old S."/>
            <person name="Mockrin S."/>
            <person name="Collins F.S."/>
        </authorList>
    </citation>
    <scope>NUCLEOTIDE SEQUENCE [LARGE SCALE GENOMIC DNA]</scope>
    <source>
        <strain>Brown Norway</strain>
    </source>
</reference>
<reference key="2">
    <citation type="journal article" date="2005" name="Am. J. Physiol.">
        <title>Molecular properties of cardiac tail-anchored membrane protein SLMAP are consistent with structural role in arrangement of excitation-contraction coupling apparatus.</title>
        <authorList>
            <person name="Guzzo R.M."/>
            <person name="Salih M."/>
            <person name="Moore E.D."/>
            <person name="Tuana B.S."/>
        </authorList>
    </citation>
    <scope>SUBCELLULAR LOCATION</scope>
</reference>
<reference key="3">
    <citation type="journal article" date="2012" name="Nat. Commun.">
        <title>Quantitative maps of protein phosphorylation sites across 14 different rat organs and tissues.</title>
        <authorList>
            <person name="Lundby A."/>
            <person name="Secher A."/>
            <person name="Lage K."/>
            <person name="Nordsborg N.B."/>
            <person name="Dmytriyev A."/>
            <person name="Lundby C."/>
            <person name="Olsen J.V."/>
        </authorList>
    </citation>
    <scope>PHOSPHORYLATION [LARGE SCALE ANALYSIS] AT SER-472 AND SER-476</scope>
    <scope>IDENTIFICATION BY MASS SPECTROMETRY [LARGE SCALE ANALYSIS]</scope>
</reference>
<protein>
    <recommendedName>
        <fullName>Sarcolemmal membrane-associated protein</fullName>
    </recommendedName>
</protein>
<organism>
    <name type="scientific">Rattus norvegicus</name>
    <name type="common">Rat</name>
    <dbReference type="NCBI Taxonomy" id="10116"/>
    <lineage>
        <taxon>Eukaryota</taxon>
        <taxon>Metazoa</taxon>
        <taxon>Chordata</taxon>
        <taxon>Craniata</taxon>
        <taxon>Vertebrata</taxon>
        <taxon>Euteleostomi</taxon>
        <taxon>Mammalia</taxon>
        <taxon>Eutheria</taxon>
        <taxon>Euarchontoglires</taxon>
        <taxon>Glires</taxon>
        <taxon>Rodentia</taxon>
        <taxon>Myomorpha</taxon>
        <taxon>Muroidea</taxon>
        <taxon>Muridae</taxon>
        <taxon>Murinae</taxon>
        <taxon>Rattus</taxon>
    </lineage>
</organism>
<keyword id="KW-1003">Cell membrane</keyword>
<keyword id="KW-0175">Coiled coil</keyword>
<keyword id="KW-0963">Cytoplasm</keyword>
<keyword id="KW-0206">Cytoskeleton</keyword>
<keyword id="KW-0256">Endoplasmic reticulum</keyword>
<keyword id="KW-0472">Membrane</keyword>
<keyword id="KW-0496">Mitochondrion</keyword>
<keyword id="KW-0597">Phosphoprotein</keyword>
<keyword id="KW-1185">Reference proteome</keyword>
<keyword id="KW-0812">Transmembrane</keyword>
<keyword id="KW-1133">Transmembrane helix</keyword>
<sequence>MPSALAIFTCRPNSHPFQERHVYLDEPIKIGRSVARCRPAQNNATFDCKVLSRNHALVWFDHKTSKFYLQDTKSSNGTFINSQRLSRGSEESPPCEILSGDIIQFGVDVTENTRKVVTHGCIVSTIKLFLPDGMEARLRSDDVIHAPLPSPVDKVAANTPSMYSQELFQLSQYLQEALHREQMLEQKLATLQRLLAITQEASDTSWQALIDEDRLLSRLEVMGNQLQACSKNQTEDSLRKELVALQEDKHSYETTAKESLRRVLQEKIEVVRKLSEVERSLSNTEDECTHLREMNERTQEELRELANKYNGAVNEIKDLSDKLKAAEGKQEEIQQKGQAEKKELQAKIDDMEEKEQELQAKIEALQADNDFTNERLTALQVVRLEPLQEKTLKECSSLGGIQVDDFLPKINGSTEKEERLLSKSGGDCTFIHQFIECQKKKLMVQGHLTKVVEESKLSKEENQAKAKESDLSDTLSPSKEKSSDDTTDDAQMDEQDLNEPLAKVSLLKDDDLQGTQAETEAKQDTQHLRKELVEAQELARASKQKCFDLQAALLEEERKAYRNQVEESAKQIQVLQVVQLQRLHMDMENLQEEKDTEISSTRDKLLSAQDEILLLHQAAAKAVSERDTDFMSLQEELKKVRAELEGWRKAASEYEEEIRSLQSTFQLRCQQCEVQQREEATRLQGGELEKLKKEWDVLENECRSLKKENVLLSSELQRQEKELHNNSQKQSLELTSDLSILQMTRKELENQMGSLKEQHLRDEADLKTLLSKAENQAKDVQKEYEKTQTVLSELKLKFEMTEQEKQSITDELKQCKDNLKLLREKGNNKPWPWMPMVAALVAVTAMVLYVPGLARASP</sequence>
<gene>
    <name type="primary">Slmap</name>
</gene>
<dbReference type="EMBL" id="AABR03100912">
    <property type="status" value="NOT_ANNOTATED_CDS"/>
    <property type="molecule type" value="Genomic_DNA"/>
</dbReference>
<dbReference type="EMBL" id="AABR03100133">
    <property type="status" value="NOT_ANNOTATED_CDS"/>
    <property type="molecule type" value="Genomic_DNA"/>
</dbReference>
<dbReference type="EMBL" id="AABR03100672">
    <property type="status" value="NOT_ANNOTATED_CDS"/>
    <property type="molecule type" value="Genomic_DNA"/>
</dbReference>
<dbReference type="EMBL" id="AABR03100596">
    <property type="status" value="NOT_ANNOTATED_CDS"/>
    <property type="molecule type" value="Genomic_DNA"/>
</dbReference>
<dbReference type="SMR" id="P0C219"/>
<dbReference type="FunCoup" id="P0C219">
    <property type="interactions" value="1224"/>
</dbReference>
<dbReference type="STRING" id="10116.ENSRNOP00000069804"/>
<dbReference type="iPTMnet" id="P0C219"/>
<dbReference type="PhosphoSitePlus" id="P0C219"/>
<dbReference type="UCSC" id="RGD:1307674">
    <property type="organism name" value="rat"/>
</dbReference>
<dbReference type="AGR" id="RGD:1307674"/>
<dbReference type="RGD" id="1307674">
    <property type="gene designation" value="Slmap"/>
</dbReference>
<dbReference type="InParanoid" id="P0C219"/>
<dbReference type="PhylomeDB" id="P0C219"/>
<dbReference type="PRO" id="PR:P0C219"/>
<dbReference type="Proteomes" id="UP000002494">
    <property type="component" value="Unplaced"/>
</dbReference>
<dbReference type="GO" id="GO:0005813">
    <property type="term" value="C:centrosome"/>
    <property type="evidence" value="ECO:0007669"/>
    <property type="project" value="UniProtKB-SubCell"/>
</dbReference>
<dbReference type="GO" id="GO:0005737">
    <property type="term" value="C:cytoplasm"/>
    <property type="evidence" value="ECO:0000266"/>
    <property type="project" value="RGD"/>
</dbReference>
<dbReference type="GO" id="GO:0005789">
    <property type="term" value="C:endoplasmic reticulum membrane"/>
    <property type="evidence" value="ECO:0007669"/>
    <property type="project" value="UniProtKB-SubCell"/>
</dbReference>
<dbReference type="GO" id="GO:0090443">
    <property type="term" value="C:FAR/SIN/STRIPAK complex"/>
    <property type="evidence" value="ECO:0000250"/>
    <property type="project" value="UniProtKB"/>
</dbReference>
<dbReference type="GO" id="GO:0016020">
    <property type="term" value="C:membrane"/>
    <property type="evidence" value="ECO:0000266"/>
    <property type="project" value="RGD"/>
</dbReference>
<dbReference type="GO" id="GO:0031966">
    <property type="term" value="C:mitochondrial membrane"/>
    <property type="evidence" value="ECO:0007669"/>
    <property type="project" value="UniProtKB-SubCell"/>
</dbReference>
<dbReference type="GO" id="GO:0042383">
    <property type="term" value="C:sarcolemma"/>
    <property type="evidence" value="ECO:0007669"/>
    <property type="project" value="UniProtKB-SubCell"/>
</dbReference>
<dbReference type="GO" id="GO:0030674">
    <property type="term" value="F:protein-macromolecule adaptor activity"/>
    <property type="evidence" value="ECO:0000250"/>
    <property type="project" value="UniProtKB"/>
</dbReference>
<dbReference type="GO" id="GO:0031267">
    <property type="term" value="F:small GTPase binding"/>
    <property type="evidence" value="ECO:0000266"/>
    <property type="project" value="RGD"/>
</dbReference>
<dbReference type="GO" id="GO:0035331">
    <property type="term" value="P:negative regulation of hippo signaling"/>
    <property type="evidence" value="ECO:0000250"/>
    <property type="project" value="UniProtKB"/>
</dbReference>
<dbReference type="GO" id="GO:0072659">
    <property type="term" value="P:protein localization to plasma membrane"/>
    <property type="evidence" value="ECO:0000266"/>
    <property type="project" value="RGD"/>
</dbReference>
<dbReference type="GO" id="GO:1900825">
    <property type="term" value="P:regulation of membrane depolarization during cardiac muscle cell action potential"/>
    <property type="evidence" value="ECO:0000266"/>
    <property type="project" value="RGD"/>
</dbReference>
<dbReference type="GO" id="GO:1902305">
    <property type="term" value="P:regulation of sodium ion transmembrane transport"/>
    <property type="evidence" value="ECO:0000266"/>
    <property type="project" value="RGD"/>
</dbReference>
<dbReference type="CDD" id="cd21911">
    <property type="entry name" value="CC1_SLMAP"/>
    <property type="match status" value="1"/>
</dbReference>
<dbReference type="CDD" id="cd22679">
    <property type="entry name" value="FHA_SLMAP"/>
    <property type="match status" value="1"/>
</dbReference>
<dbReference type="FunFam" id="2.60.200.20:FF:000003">
    <property type="entry name" value="sarcolemmal membrane-associated protein isoform X2"/>
    <property type="match status" value="1"/>
</dbReference>
<dbReference type="Gene3D" id="2.60.200.20">
    <property type="match status" value="1"/>
</dbReference>
<dbReference type="InterPro" id="IPR051176">
    <property type="entry name" value="Cent_Immune-Sig_Mod"/>
</dbReference>
<dbReference type="InterPro" id="IPR000253">
    <property type="entry name" value="FHA_dom"/>
</dbReference>
<dbReference type="InterPro" id="IPR008984">
    <property type="entry name" value="SMAD_FHA_dom_sf"/>
</dbReference>
<dbReference type="PANTHER" id="PTHR15715">
    <property type="entry name" value="CENTROSOMAL PROTEIN OF 170 KDA"/>
    <property type="match status" value="1"/>
</dbReference>
<dbReference type="PANTHER" id="PTHR15715:SF22">
    <property type="entry name" value="SARCOLEMMAL MEMBRANE-ASSOCIATED PROTEIN"/>
    <property type="match status" value="1"/>
</dbReference>
<dbReference type="Pfam" id="PF00498">
    <property type="entry name" value="FHA"/>
    <property type="match status" value="1"/>
</dbReference>
<dbReference type="SMART" id="SM00240">
    <property type="entry name" value="FHA"/>
    <property type="match status" value="1"/>
</dbReference>
<dbReference type="SUPFAM" id="SSF49879">
    <property type="entry name" value="SMAD/FHA domain"/>
    <property type="match status" value="1"/>
</dbReference>
<dbReference type="PROSITE" id="PS50006">
    <property type="entry name" value="FHA_DOMAIN"/>
    <property type="match status" value="1"/>
</dbReference>